<keyword id="KW-0004">4Fe-4S</keyword>
<keyword id="KW-0408">Iron</keyword>
<keyword id="KW-0411">Iron-sulfur</keyword>
<keyword id="KW-0456">Lyase</keyword>
<keyword id="KW-0479">Metal-binding</keyword>
<keyword id="KW-0949">S-adenosyl-L-methionine</keyword>
<keyword id="KW-0784">Thiamine biosynthesis</keyword>
<keyword id="KW-0862">Zinc</keyword>
<comment type="function">
    <text evidence="1">Catalyzes the synthesis of the hydroxymethylpyrimidine phosphate (HMP-P) moiety of thiamine from aminoimidazole ribotide (AIR) in a radical S-adenosyl-L-methionine (SAM)-dependent reaction.</text>
</comment>
<comment type="catalytic activity">
    <reaction evidence="1">
        <text>5-amino-1-(5-phospho-beta-D-ribosyl)imidazole + S-adenosyl-L-methionine = 4-amino-2-methyl-5-(phosphooxymethyl)pyrimidine + CO + 5'-deoxyadenosine + formate + L-methionine + 3 H(+)</text>
        <dbReference type="Rhea" id="RHEA:24840"/>
        <dbReference type="ChEBI" id="CHEBI:15378"/>
        <dbReference type="ChEBI" id="CHEBI:15740"/>
        <dbReference type="ChEBI" id="CHEBI:17245"/>
        <dbReference type="ChEBI" id="CHEBI:17319"/>
        <dbReference type="ChEBI" id="CHEBI:57844"/>
        <dbReference type="ChEBI" id="CHEBI:58354"/>
        <dbReference type="ChEBI" id="CHEBI:59789"/>
        <dbReference type="ChEBI" id="CHEBI:137981"/>
        <dbReference type="EC" id="4.1.99.17"/>
    </reaction>
</comment>
<comment type="cofactor">
    <cofactor evidence="1">
        <name>[4Fe-4S] cluster</name>
        <dbReference type="ChEBI" id="CHEBI:49883"/>
    </cofactor>
    <text evidence="1">Binds 1 [4Fe-4S] cluster per subunit. The cluster is coordinated with 3 cysteines and an exchangeable S-adenosyl-L-methionine.</text>
</comment>
<comment type="pathway">
    <text evidence="1">Cofactor biosynthesis; thiamine diphosphate biosynthesis.</text>
</comment>
<comment type="subunit">
    <text evidence="1">Homodimer.</text>
</comment>
<comment type="similarity">
    <text evidence="1">Belongs to the ThiC family.</text>
</comment>
<dbReference type="EC" id="4.1.99.17" evidence="1"/>
<dbReference type="EMBL" id="CP001233">
    <property type="protein sequence ID" value="ACP04397.1"/>
    <property type="molecule type" value="Genomic_DNA"/>
</dbReference>
<dbReference type="RefSeq" id="WP_000071109.1">
    <property type="nucleotide sequence ID" value="NC_012578.1"/>
</dbReference>
<dbReference type="SMR" id="C3LPQ3"/>
<dbReference type="KEGG" id="vcm:VCM66_0061"/>
<dbReference type="HOGENOM" id="CLU_013181_2_1_6"/>
<dbReference type="UniPathway" id="UPA00060"/>
<dbReference type="Proteomes" id="UP000001217">
    <property type="component" value="Chromosome I"/>
</dbReference>
<dbReference type="GO" id="GO:0005829">
    <property type="term" value="C:cytosol"/>
    <property type="evidence" value="ECO:0007669"/>
    <property type="project" value="TreeGrafter"/>
</dbReference>
<dbReference type="GO" id="GO:0051539">
    <property type="term" value="F:4 iron, 4 sulfur cluster binding"/>
    <property type="evidence" value="ECO:0007669"/>
    <property type="project" value="UniProtKB-KW"/>
</dbReference>
<dbReference type="GO" id="GO:0016830">
    <property type="term" value="F:carbon-carbon lyase activity"/>
    <property type="evidence" value="ECO:0007669"/>
    <property type="project" value="InterPro"/>
</dbReference>
<dbReference type="GO" id="GO:0008270">
    <property type="term" value="F:zinc ion binding"/>
    <property type="evidence" value="ECO:0007669"/>
    <property type="project" value="UniProtKB-UniRule"/>
</dbReference>
<dbReference type="GO" id="GO:0009228">
    <property type="term" value="P:thiamine biosynthetic process"/>
    <property type="evidence" value="ECO:0007669"/>
    <property type="project" value="UniProtKB-KW"/>
</dbReference>
<dbReference type="GO" id="GO:0009229">
    <property type="term" value="P:thiamine diphosphate biosynthetic process"/>
    <property type="evidence" value="ECO:0007669"/>
    <property type="project" value="UniProtKB-UniRule"/>
</dbReference>
<dbReference type="FunFam" id="3.20.20.540:FF:000001">
    <property type="entry name" value="Phosphomethylpyrimidine synthase"/>
    <property type="match status" value="1"/>
</dbReference>
<dbReference type="Gene3D" id="6.10.250.620">
    <property type="match status" value="1"/>
</dbReference>
<dbReference type="Gene3D" id="3.20.20.540">
    <property type="entry name" value="Radical SAM ThiC family, central domain"/>
    <property type="match status" value="1"/>
</dbReference>
<dbReference type="HAMAP" id="MF_00089">
    <property type="entry name" value="ThiC"/>
    <property type="match status" value="1"/>
</dbReference>
<dbReference type="InterPro" id="IPR037509">
    <property type="entry name" value="ThiC"/>
</dbReference>
<dbReference type="InterPro" id="IPR025747">
    <property type="entry name" value="ThiC-associated_dom"/>
</dbReference>
<dbReference type="InterPro" id="IPR038521">
    <property type="entry name" value="ThiC/Bza_core_dom"/>
</dbReference>
<dbReference type="InterPro" id="IPR002817">
    <property type="entry name" value="ThiC/BzaA/B"/>
</dbReference>
<dbReference type="NCBIfam" id="NF006763">
    <property type="entry name" value="PRK09284.1"/>
    <property type="match status" value="1"/>
</dbReference>
<dbReference type="NCBIfam" id="NF009895">
    <property type="entry name" value="PRK13352.1"/>
    <property type="match status" value="1"/>
</dbReference>
<dbReference type="NCBIfam" id="TIGR00190">
    <property type="entry name" value="thiC"/>
    <property type="match status" value="1"/>
</dbReference>
<dbReference type="PANTHER" id="PTHR30557:SF1">
    <property type="entry name" value="PHOSPHOMETHYLPYRIMIDINE SYNTHASE, CHLOROPLASTIC"/>
    <property type="match status" value="1"/>
</dbReference>
<dbReference type="PANTHER" id="PTHR30557">
    <property type="entry name" value="THIAMINE BIOSYNTHESIS PROTEIN THIC"/>
    <property type="match status" value="1"/>
</dbReference>
<dbReference type="Pfam" id="PF13667">
    <property type="entry name" value="ThiC-associated"/>
    <property type="match status" value="1"/>
</dbReference>
<dbReference type="Pfam" id="PF01964">
    <property type="entry name" value="ThiC_Rad_SAM"/>
    <property type="match status" value="1"/>
</dbReference>
<dbReference type="SFLD" id="SFLDF00407">
    <property type="entry name" value="phosphomethylpyrimidine_syntha"/>
    <property type="match status" value="1"/>
</dbReference>
<dbReference type="SFLD" id="SFLDG01114">
    <property type="entry name" value="phosphomethylpyrimidine_syntha"/>
    <property type="match status" value="1"/>
</dbReference>
<dbReference type="SFLD" id="SFLDS00113">
    <property type="entry name" value="Radical_SAM_Phosphomethylpyrim"/>
    <property type="match status" value="1"/>
</dbReference>
<sequence length="645" mass="72634">MSNRKQARLEAKRFIDTLSVEPYPNSQKSYLLGSRPDIRVPVREITLSDTLVGGSKDAPIFEPNEPICVYDTSGVYTDPSHDIDLYKGLPKLREEWIEERRDTHILPSMSSHFARERLADETLDELRYGHLPRIRRAMGQHRVTQLHYARQGIITPEMEFVAIRENSRRLAHQDPSLLQQHAGQNFGAHLPDLITPEFVRREIAEGRAIIPCNINHPESEPMIIGRNFLVKVNANIGNSSVSSSIEEEVEKLVWATRWGADTVMDLSTGRNIHETREWILRNSPVPIGTVPMYQALEKVNGVAENLTWEVMRDTLLEQAEQGVDYFTIHAGLLLRYVPMTAKRVTGIVSRGGSIIAKWCLSHHQENFLYTHFREICEICAQYDVALSLGDGLRPGSIADANDEAQFAELRTLGELTQIAWEYDVQVMIEGPGHVPMHLIKANMDEQLKHCHEAPFYTLGPLTTDIAPGYDHITSGIGAAMIGWFGCAMLCYVTPKEHLGLPNKEDVKTGLITYKLAAHAADLAKGHPGAQIRDNALSKARFEFRWEDQFNLALDPVTARAFHDETLPQESGKVAHFCSMCGPKFCSMKISQEVRDYANNQTLDTTVIDLVMPAESIQLAMQDKSREFLASGAELYHPLVKEPIEE</sequence>
<feature type="chain" id="PRO_1000198067" description="Phosphomethylpyrimidine synthase">
    <location>
        <begin position="1"/>
        <end position="645"/>
    </location>
</feature>
<feature type="binding site" evidence="1">
    <location>
        <position position="235"/>
    </location>
    <ligand>
        <name>substrate</name>
    </ligand>
</feature>
<feature type="binding site" evidence="1">
    <location>
        <position position="264"/>
    </location>
    <ligand>
        <name>substrate</name>
    </ligand>
</feature>
<feature type="binding site" evidence="1">
    <location>
        <position position="293"/>
    </location>
    <ligand>
        <name>substrate</name>
    </ligand>
</feature>
<feature type="binding site" evidence="1">
    <location>
        <position position="329"/>
    </location>
    <ligand>
        <name>substrate</name>
    </ligand>
</feature>
<feature type="binding site" evidence="1">
    <location>
        <begin position="349"/>
        <end position="351"/>
    </location>
    <ligand>
        <name>substrate</name>
    </ligand>
</feature>
<feature type="binding site" evidence="1">
    <location>
        <begin position="390"/>
        <end position="393"/>
    </location>
    <ligand>
        <name>substrate</name>
    </ligand>
</feature>
<feature type="binding site" evidence="1">
    <location>
        <position position="429"/>
    </location>
    <ligand>
        <name>substrate</name>
    </ligand>
</feature>
<feature type="binding site" evidence="1">
    <location>
        <position position="433"/>
    </location>
    <ligand>
        <name>Zn(2+)</name>
        <dbReference type="ChEBI" id="CHEBI:29105"/>
    </ligand>
</feature>
<feature type="binding site" evidence="1">
    <location>
        <position position="456"/>
    </location>
    <ligand>
        <name>substrate</name>
    </ligand>
</feature>
<feature type="binding site" evidence="1">
    <location>
        <position position="497"/>
    </location>
    <ligand>
        <name>Zn(2+)</name>
        <dbReference type="ChEBI" id="CHEBI:29105"/>
    </ligand>
</feature>
<feature type="binding site" evidence="1">
    <location>
        <position position="577"/>
    </location>
    <ligand>
        <name>[4Fe-4S] cluster</name>
        <dbReference type="ChEBI" id="CHEBI:49883"/>
        <note>4Fe-4S-S-AdoMet</note>
    </ligand>
</feature>
<feature type="binding site" evidence="1">
    <location>
        <position position="580"/>
    </location>
    <ligand>
        <name>[4Fe-4S] cluster</name>
        <dbReference type="ChEBI" id="CHEBI:49883"/>
        <note>4Fe-4S-S-AdoMet</note>
    </ligand>
</feature>
<feature type="binding site" evidence="1">
    <location>
        <position position="585"/>
    </location>
    <ligand>
        <name>[4Fe-4S] cluster</name>
        <dbReference type="ChEBI" id="CHEBI:49883"/>
        <note>4Fe-4S-S-AdoMet</note>
    </ligand>
</feature>
<accession>C3LPQ3</accession>
<name>THIC_VIBCM</name>
<protein>
    <recommendedName>
        <fullName evidence="1">Phosphomethylpyrimidine synthase</fullName>
        <ecNumber evidence="1">4.1.99.17</ecNumber>
    </recommendedName>
    <alternativeName>
        <fullName evidence="1">Hydroxymethylpyrimidine phosphate synthase</fullName>
        <shortName evidence="1">HMP-P synthase</shortName>
        <shortName evidence="1">HMP-phosphate synthase</shortName>
        <shortName evidence="1">HMPP synthase</shortName>
    </alternativeName>
    <alternativeName>
        <fullName evidence="1">Thiamine biosynthesis protein ThiC</fullName>
    </alternativeName>
</protein>
<proteinExistence type="inferred from homology"/>
<evidence type="ECO:0000255" key="1">
    <source>
        <dbReference type="HAMAP-Rule" id="MF_00089"/>
    </source>
</evidence>
<organism>
    <name type="scientific">Vibrio cholerae serotype O1 (strain M66-2)</name>
    <dbReference type="NCBI Taxonomy" id="579112"/>
    <lineage>
        <taxon>Bacteria</taxon>
        <taxon>Pseudomonadati</taxon>
        <taxon>Pseudomonadota</taxon>
        <taxon>Gammaproteobacteria</taxon>
        <taxon>Vibrionales</taxon>
        <taxon>Vibrionaceae</taxon>
        <taxon>Vibrio</taxon>
    </lineage>
</organism>
<reference key="1">
    <citation type="journal article" date="2008" name="PLoS ONE">
        <title>A recalibrated molecular clock and independent origins for the cholera pandemic clones.</title>
        <authorList>
            <person name="Feng L."/>
            <person name="Reeves P.R."/>
            <person name="Lan R."/>
            <person name="Ren Y."/>
            <person name="Gao C."/>
            <person name="Zhou Z."/>
            <person name="Ren Y."/>
            <person name="Cheng J."/>
            <person name="Wang W."/>
            <person name="Wang J."/>
            <person name="Qian W."/>
            <person name="Li D."/>
            <person name="Wang L."/>
        </authorList>
    </citation>
    <scope>NUCLEOTIDE SEQUENCE [LARGE SCALE GENOMIC DNA]</scope>
    <source>
        <strain>M66-2</strain>
    </source>
</reference>
<gene>
    <name evidence="1" type="primary">thiC</name>
    <name type="ordered locus">VCM66_0061</name>
</gene>